<name>PSB28_PROMS</name>
<gene>
    <name evidence="1" type="primary">psb28</name>
    <name type="ordered locus">A9601_09341</name>
</gene>
<protein>
    <recommendedName>
        <fullName evidence="1">Photosystem II reaction center Psb28 protein</fullName>
    </recommendedName>
    <alternativeName>
        <fullName evidence="1">Photosystem II 13 kDa protein</fullName>
    </alternativeName>
    <alternativeName>
        <fullName evidence="1">Photosystem II reaction center W protein</fullName>
    </alternativeName>
</protein>
<dbReference type="EMBL" id="CP000551">
    <property type="protein sequence ID" value="ABM70218.1"/>
    <property type="molecule type" value="Genomic_DNA"/>
</dbReference>
<dbReference type="RefSeq" id="WP_011818374.1">
    <property type="nucleotide sequence ID" value="NC_008816.1"/>
</dbReference>
<dbReference type="SMR" id="A2BR07"/>
<dbReference type="STRING" id="146891.A9601_09341"/>
<dbReference type="KEGG" id="pmb:A9601_09341"/>
<dbReference type="eggNOG" id="ENOG5031GDS">
    <property type="taxonomic scope" value="Bacteria"/>
</dbReference>
<dbReference type="HOGENOM" id="CLU_137323_1_0_3"/>
<dbReference type="OrthoDB" id="559598at2"/>
<dbReference type="Proteomes" id="UP000002590">
    <property type="component" value="Chromosome"/>
</dbReference>
<dbReference type="GO" id="GO:0009654">
    <property type="term" value="C:photosystem II oxygen evolving complex"/>
    <property type="evidence" value="ECO:0007669"/>
    <property type="project" value="InterPro"/>
</dbReference>
<dbReference type="GO" id="GO:0031676">
    <property type="term" value="C:plasma membrane-derived thylakoid membrane"/>
    <property type="evidence" value="ECO:0007669"/>
    <property type="project" value="UniProtKB-SubCell"/>
</dbReference>
<dbReference type="GO" id="GO:0015979">
    <property type="term" value="P:photosynthesis"/>
    <property type="evidence" value="ECO:0007669"/>
    <property type="project" value="UniProtKB-UniRule"/>
</dbReference>
<dbReference type="Gene3D" id="2.40.30.220">
    <property type="entry name" value="Photosystem II Psb28"/>
    <property type="match status" value="1"/>
</dbReference>
<dbReference type="HAMAP" id="MF_01370">
    <property type="entry name" value="PSII_Psb28"/>
    <property type="match status" value="1"/>
</dbReference>
<dbReference type="InterPro" id="IPR038676">
    <property type="entry name" value="Psb28_c1_sf"/>
</dbReference>
<dbReference type="InterPro" id="IPR005610">
    <property type="entry name" value="PSII_Psb28_class-1"/>
</dbReference>
<dbReference type="NCBIfam" id="TIGR03047">
    <property type="entry name" value="PS_II_psb28"/>
    <property type="match status" value="1"/>
</dbReference>
<dbReference type="PANTHER" id="PTHR34963">
    <property type="match status" value="1"/>
</dbReference>
<dbReference type="PANTHER" id="PTHR34963:SF2">
    <property type="entry name" value="PHOTOSYSTEM II REACTION CENTER PSB28 PROTEIN, CHLOROPLASTIC"/>
    <property type="match status" value="1"/>
</dbReference>
<dbReference type="Pfam" id="PF03912">
    <property type="entry name" value="Psb28"/>
    <property type="match status" value="1"/>
</dbReference>
<organism>
    <name type="scientific">Prochlorococcus marinus (strain AS9601)</name>
    <dbReference type="NCBI Taxonomy" id="146891"/>
    <lineage>
        <taxon>Bacteria</taxon>
        <taxon>Bacillati</taxon>
        <taxon>Cyanobacteriota</taxon>
        <taxon>Cyanophyceae</taxon>
        <taxon>Synechococcales</taxon>
        <taxon>Prochlorococcaceae</taxon>
        <taxon>Prochlorococcus</taxon>
    </lineage>
</organism>
<feature type="chain" id="PRO_1000068190" description="Photosystem II reaction center Psb28 protein">
    <location>
        <begin position="1"/>
        <end position="117"/>
    </location>
</feature>
<reference key="1">
    <citation type="journal article" date="2007" name="PLoS Genet.">
        <title>Patterns and implications of gene gain and loss in the evolution of Prochlorococcus.</title>
        <authorList>
            <person name="Kettler G.C."/>
            <person name="Martiny A.C."/>
            <person name="Huang K."/>
            <person name="Zucker J."/>
            <person name="Coleman M.L."/>
            <person name="Rodrigue S."/>
            <person name="Chen F."/>
            <person name="Lapidus A."/>
            <person name="Ferriera S."/>
            <person name="Johnson J."/>
            <person name="Steglich C."/>
            <person name="Church G.M."/>
            <person name="Richardson P."/>
            <person name="Chisholm S.W."/>
        </authorList>
    </citation>
    <scope>NUCLEOTIDE SEQUENCE [LARGE SCALE GENOMIC DNA]</scope>
    <source>
        <strain>AS9601</strain>
    </source>
</reference>
<proteinExistence type="inferred from homology"/>
<keyword id="KW-0472">Membrane</keyword>
<keyword id="KW-0602">Photosynthesis</keyword>
<keyword id="KW-0604">Photosystem II</keyword>
<keyword id="KW-0793">Thylakoid</keyword>
<accession>A2BR07</accession>
<sequence>MTSNKTAKIQFYEGTDEPVVPEIRLTRSKDGTTGQALFLFEKPQALSSITDGEITGMRMIDTEGEILTREVKVKFVDGEPIFLEAVYIWKNTPDFDRFMRFANSYAKSNGLGYSEKK</sequence>
<comment type="subunit">
    <text evidence="1">Part of the photosystem II complex.</text>
</comment>
<comment type="subcellular location">
    <subcellularLocation>
        <location evidence="1">Cellular thylakoid membrane</location>
        <topology evidence="1">Peripheral membrane protein</topology>
        <orientation evidence="1">Cytoplasmic side</orientation>
    </subcellularLocation>
</comment>
<comment type="similarity">
    <text evidence="1">Belongs to the Psb28 family.</text>
</comment>
<evidence type="ECO:0000255" key="1">
    <source>
        <dbReference type="HAMAP-Rule" id="MF_01370"/>
    </source>
</evidence>